<protein>
    <recommendedName>
        <fullName>Proteasome assembly chaperone 2</fullName>
    </recommendedName>
</protein>
<comment type="function">
    <text evidence="1">Chaperone protein which promotes assembly of the 20S proteasome as part of a heterodimer with psmg1.</text>
</comment>
<comment type="subunit">
    <text evidence="1">Forms a heterodimer with psmg1.</text>
</comment>
<comment type="subcellular location">
    <subcellularLocation>
        <location evidence="1">Nucleus</location>
    </subcellularLocation>
</comment>
<comment type="similarity">
    <text evidence="2">Belongs to the PSMG2 family.</text>
</comment>
<feature type="chain" id="PRO_0000328453" description="Proteasome assembly chaperone 2">
    <location>
        <begin position="1"/>
        <end position="244"/>
    </location>
</feature>
<evidence type="ECO:0000250" key="1"/>
<evidence type="ECO:0000305" key="2"/>
<organism>
    <name type="scientific">Nematostella vectensis</name>
    <name type="common">Starlet sea anemone</name>
    <dbReference type="NCBI Taxonomy" id="45351"/>
    <lineage>
        <taxon>Eukaryota</taxon>
        <taxon>Metazoa</taxon>
        <taxon>Cnidaria</taxon>
        <taxon>Anthozoa</taxon>
        <taxon>Hexacorallia</taxon>
        <taxon>Actiniaria</taxon>
        <taxon>Edwardsiidae</taxon>
        <taxon>Nematostella</taxon>
    </lineage>
</organism>
<gene>
    <name type="primary">psmg2</name>
    <name type="ORF">v1g117792</name>
</gene>
<sequence>MFVPCAENVNDLDFSGFTLILPAVSIGNVGQLATDLTISSLSSSRHLIGYLHDASILPVVGNDAFARLGHEKGELNLSAEVYQSTEKRLVIVQQRAPISKGHYANYCQKLLAWIKRCSFKQVVLLSSISATDRVDAQLQGSPLRYMTTSVSQQLSSSFDKLSWVQLEKRPKFPDMTKESDELQFYLPGGGVTKRFFDRCEKEDVPLAVLMTFCSEGDNIADAVSLFLYLNDWLEITNKDTVGVN</sequence>
<name>PSMG2_NEMVE</name>
<keyword id="KW-0143">Chaperone</keyword>
<keyword id="KW-0539">Nucleus</keyword>
<keyword id="KW-1185">Reference proteome</keyword>
<proteinExistence type="inferred from homology"/>
<accession>A7SGU6</accession>
<dbReference type="EMBL" id="DS469655">
    <property type="protein sequence ID" value="EDO37041.1"/>
    <property type="molecule type" value="Genomic_DNA"/>
</dbReference>
<dbReference type="RefSeq" id="XP_001629104.1">
    <property type="nucleotide sequence ID" value="XM_001629054.1"/>
</dbReference>
<dbReference type="SMR" id="A7SGU6"/>
<dbReference type="STRING" id="45351.A7SGU6"/>
<dbReference type="EnsemblMetazoa" id="EDO37041">
    <property type="protein sequence ID" value="EDO37041"/>
    <property type="gene ID" value="NEMVEDRAFT_v1g117792"/>
</dbReference>
<dbReference type="KEGG" id="nve:5508539"/>
<dbReference type="eggNOG" id="KOG3112">
    <property type="taxonomic scope" value="Eukaryota"/>
</dbReference>
<dbReference type="HOGENOM" id="CLU_062640_0_1_1"/>
<dbReference type="InParanoid" id="A7SGU6"/>
<dbReference type="OMA" id="WKEHTGE"/>
<dbReference type="PhylomeDB" id="A7SGU6"/>
<dbReference type="Proteomes" id="UP000001593">
    <property type="component" value="Unassembled WGS sequence"/>
</dbReference>
<dbReference type="GO" id="GO:0005829">
    <property type="term" value="C:cytosol"/>
    <property type="evidence" value="ECO:0000318"/>
    <property type="project" value="GO_Central"/>
</dbReference>
<dbReference type="GO" id="GO:0005634">
    <property type="term" value="C:nucleus"/>
    <property type="evidence" value="ECO:0000318"/>
    <property type="project" value="GO_Central"/>
</dbReference>
<dbReference type="GO" id="GO:0043248">
    <property type="term" value="P:proteasome assembly"/>
    <property type="evidence" value="ECO:0000318"/>
    <property type="project" value="GO_Central"/>
</dbReference>
<dbReference type="Gene3D" id="3.40.50.10900">
    <property type="entry name" value="PAC-like subunit"/>
    <property type="match status" value="2"/>
</dbReference>
<dbReference type="InterPro" id="IPR019151">
    <property type="entry name" value="Proteasome_assmbl_chaperone_2"/>
</dbReference>
<dbReference type="InterPro" id="IPR016562">
    <property type="entry name" value="Proteasome_assmbl_chp_2_euk"/>
</dbReference>
<dbReference type="InterPro" id="IPR038389">
    <property type="entry name" value="PSMG2_sf"/>
</dbReference>
<dbReference type="PANTHER" id="PTHR12970">
    <property type="entry name" value="PROTEASOME ASSEMBLY CHAPERONE 2"/>
    <property type="match status" value="1"/>
</dbReference>
<dbReference type="PANTHER" id="PTHR12970:SF1">
    <property type="entry name" value="PROTEASOME ASSEMBLY CHAPERONE 2"/>
    <property type="match status" value="1"/>
</dbReference>
<dbReference type="Pfam" id="PF09754">
    <property type="entry name" value="PAC2"/>
    <property type="match status" value="1"/>
</dbReference>
<dbReference type="PIRSF" id="PIRSF010044">
    <property type="entry name" value="UCP010044"/>
    <property type="match status" value="1"/>
</dbReference>
<reference key="1">
    <citation type="journal article" date="2007" name="Science">
        <title>Sea anemone genome reveals ancestral eumetazoan gene repertoire and genomic organization.</title>
        <authorList>
            <person name="Putnam N.H."/>
            <person name="Srivastava M."/>
            <person name="Hellsten U."/>
            <person name="Dirks B."/>
            <person name="Chapman J."/>
            <person name="Salamov A."/>
            <person name="Terry A."/>
            <person name="Shapiro H."/>
            <person name="Lindquist E."/>
            <person name="Kapitonov V.V."/>
            <person name="Jurka J."/>
            <person name="Genikhovich G."/>
            <person name="Grigoriev I.V."/>
            <person name="Lucas S.M."/>
            <person name="Steele R.E."/>
            <person name="Finnerty J.R."/>
            <person name="Technau U."/>
            <person name="Martindale M.Q."/>
            <person name="Rokhsar D.S."/>
        </authorList>
    </citation>
    <scope>NUCLEOTIDE SEQUENCE [LARGE SCALE GENOMIC DNA]</scope>
    <source>
        <strain>CH2 X CH6</strain>
    </source>
</reference>